<reference key="1">
    <citation type="submission" date="2000-03" db="EMBL/GenBank/DDBJ databases">
        <title>A genomic survey of the extreme thermophilic, CO-utilizing bacterium Carboxydothermus hydrogenoformans.</title>
        <authorList>
            <person name="Gonzalez J.M."/>
            <person name="Robb F.T."/>
        </authorList>
    </citation>
    <scope>NUCLEOTIDE SEQUENCE [GENOMIC DNA]</scope>
</reference>
<reference key="2">
    <citation type="journal article" date="2005" name="PLoS Genet.">
        <title>Life in hot carbon monoxide: the complete genome sequence of Carboxydothermus hydrogenoformans Z-2901.</title>
        <authorList>
            <person name="Wu M."/>
            <person name="Ren Q."/>
            <person name="Durkin A.S."/>
            <person name="Daugherty S.C."/>
            <person name="Brinkac L.M."/>
            <person name="Dodson R.J."/>
            <person name="Madupu R."/>
            <person name="Sullivan S.A."/>
            <person name="Kolonay J.F."/>
            <person name="Nelson W.C."/>
            <person name="Tallon L.J."/>
            <person name="Jones K.M."/>
            <person name="Ulrich L.E."/>
            <person name="Gonzalez J.M."/>
            <person name="Zhulin I.B."/>
            <person name="Robb F.T."/>
            <person name="Eisen J.A."/>
        </authorList>
    </citation>
    <scope>NUCLEOTIDE SEQUENCE [LARGE SCALE GENOMIC DNA]</scope>
    <source>
        <strain>ATCC BAA-161 / DSM 6008 / Z-2901</strain>
    </source>
</reference>
<proteinExistence type="inferred from homology"/>
<accession>Q9F8Q3</accession>
<accession>Q3AFL6</accession>
<comment type="function">
    <text evidence="1">Hydrolyzes ribosome-free peptidyl-tRNAs (with 1 or more amino acids incorporated), which drop off the ribosome during protein synthesis, or as a result of ribosome stalling.</text>
</comment>
<comment type="function">
    <text evidence="1">Catalyzes the release of premature peptidyl moieties from peptidyl-tRNA molecules trapped in stalled 50S ribosomal subunits, and thus maintains levels of free tRNAs and 50S ribosomes.</text>
</comment>
<comment type="catalytic activity">
    <reaction evidence="1">
        <text>an N-acyl-L-alpha-aminoacyl-tRNA + H2O = an N-acyl-L-amino acid + a tRNA + H(+)</text>
        <dbReference type="Rhea" id="RHEA:54448"/>
        <dbReference type="Rhea" id="RHEA-COMP:10123"/>
        <dbReference type="Rhea" id="RHEA-COMP:13883"/>
        <dbReference type="ChEBI" id="CHEBI:15377"/>
        <dbReference type="ChEBI" id="CHEBI:15378"/>
        <dbReference type="ChEBI" id="CHEBI:59874"/>
        <dbReference type="ChEBI" id="CHEBI:78442"/>
        <dbReference type="ChEBI" id="CHEBI:138191"/>
        <dbReference type="EC" id="3.1.1.29"/>
    </reaction>
</comment>
<comment type="subunit">
    <text evidence="1">Monomer.</text>
</comment>
<comment type="subcellular location">
    <subcellularLocation>
        <location evidence="1">Cytoplasm</location>
    </subcellularLocation>
</comment>
<comment type="similarity">
    <text evidence="1">Belongs to the PTH family.</text>
</comment>
<feature type="chain" id="PRO_0000187714" description="Peptidyl-tRNA hydrolase">
    <location>
        <begin position="1"/>
        <end position="187"/>
    </location>
</feature>
<feature type="active site" description="Proton acceptor" evidence="1">
    <location>
        <position position="19"/>
    </location>
</feature>
<feature type="binding site" evidence="1">
    <location>
        <position position="14"/>
    </location>
    <ligand>
        <name>tRNA</name>
        <dbReference type="ChEBI" id="CHEBI:17843"/>
    </ligand>
</feature>
<feature type="binding site" evidence="1">
    <location>
        <position position="64"/>
    </location>
    <ligand>
        <name>tRNA</name>
        <dbReference type="ChEBI" id="CHEBI:17843"/>
    </ligand>
</feature>
<feature type="binding site" evidence="1">
    <location>
        <position position="66"/>
    </location>
    <ligand>
        <name>tRNA</name>
        <dbReference type="ChEBI" id="CHEBI:17843"/>
    </ligand>
</feature>
<feature type="site" description="Discriminates between blocked and unblocked aminoacyl-tRNA" evidence="1">
    <location>
        <position position="9"/>
    </location>
</feature>
<feature type="site" description="Stabilizes the basic form of H active site to accept a proton" evidence="1">
    <location>
        <position position="91"/>
    </location>
</feature>
<feature type="sequence conflict" description="In Ref. 1; AAG23529." evidence="2" ref="1">
    <original>MFIIAGL</original>
    <variation>MYHSRI</variation>
    <location>
        <begin position="1"/>
        <end position="7"/>
    </location>
</feature>
<feature type="sequence conflict" description="In Ref. 1; AAG23529." evidence="2" ref="1">
    <original>R</original>
    <variation>C</variation>
    <location>
        <position position="101"/>
    </location>
</feature>
<dbReference type="EC" id="3.1.1.29" evidence="1"/>
<dbReference type="EMBL" id="AF244580">
    <property type="protein sequence ID" value="AAG23529.1"/>
    <property type="molecule type" value="Genomic_DNA"/>
</dbReference>
<dbReference type="EMBL" id="CP000141">
    <property type="protein sequence ID" value="ABB14729.1"/>
    <property type="molecule type" value="Genomic_DNA"/>
</dbReference>
<dbReference type="RefSeq" id="WP_011343144.1">
    <property type="nucleotide sequence ID" value="NC_007503.1"/>
</dbReference>
<dbReference type="SMR" id="Q9F8Q3"/>
<dbReference type="FunCoup" id="Q9F8Q3">
    <property type="interactions" value="386"/>
</dbReference>
<dbReference type="STRING" id="246194.CHY_0196"/>
<dbReference type="KEGG" id="chy:CHY_0196"/>
<dbReference type="eggNOG" id="COG0193">
    <property type="taxonomic scope" value="Bacteria"/>
</dbReference>
<dbReference type="HOGENOM" id="CLU_062456_4_1_9"/>
<dbReference type="InParanoid" id="Q9F8Q3"/>
<dbReference type="OrthoDB" id="9800507at2"/>
<dbReference type="Proteomes" id="UP000002706">
    <property type="component" value="Chromosome"/>
</dbReference>
<dbReference type="GO" id="GO:0005737">
    <property type="term" value="C:cytoplasm"/>
    <property type="evidence" value="ECO:0007669"/>
    <property type="project" value="UniProtKB-SubCell"/>
</dbReference>
<dbReference type="GO" id="GO:0004045">
    <property type="term" value="F:peptidyl-tRNA hydrolase activity"/>
    <property type="evidence" value="ECO:0007669"/>
    <property type="project" value="UniProtKB-UniRule"/>
</dbReference>
<dbReference type="GO" id="GO:0000049">
    <property type="term" value="F:tRNA binding"/>
    <property type="evidence" value="ECO:0007669"/>
    <property type="project" value="UniProtKB-UniRule"/>
</dbReference>
<dbReference type="GO" id="GO:0006515">
    <property type="term" value="P:protein quality control for misfolded or incompletely synthesized proteins"/>
    <property type="evidence" value="ECO:0007669"/>
    <property type="project" value="UniProtKB-UniRule"/>
</dbReference>
<dbReference type="GO" id="GO:0072344">
    <property type="term" value="P:rescue of stalled ribosome"/>
    <property type="evidence" value="ECO:0007669"/>
    <property type="project" value="UniProtKB-UniRule"/>
</dbReference>
<dbReference type="CDD" id="cd00462">
    <property type="entry name" value="PTH"/>
    <property type="match status" value="1"/>
</dbReference>
<dbReference type="FunFam" id="3.40.50.1470:FF:000001">
    <property type="entry name" value="Peptidyl-tRNA hydrolase"/>
    <property type="match status" value="1"/>
</dbReference>
<dbReference type="Gene3D" id="3.40.50.1470">
    <property type="entry name" value="Peptidyl-tRNA hydrolase"/>
    <property type="match status" value="1"/>
</dbReference>
<dbReference type="HAMAP" id="MF_00083">
    <property type="entry name" value="Pept_tRNA_hydro_bact"/>
    <property type="match status" value="1"/>
</dbReference>
<dbReference type="InterPro" id="IPR001328">
    <property type="entry name" value="Pept_tRNA_hydro"/>
</dbReference>
<dbReference type="InterPro" id="IPR018171">
    <property type="entry name" value="Pept_tRNA_hydro_CS"/>
</dbReference>
<dbReference type="InterPro" id="IPR036416">
    <property type="entry name" value="Pept_tRNA_hydro_sf"/>
</dbReference>
<dbReference type="NCBIfam" id="TIGR00447">
    <property type="entry name" value="pth"/>
    <property type="match status" value="1"/>
</dbReference>
<dbReference type="PANTHER" id="PTHR17224">
    <property type="entry name" value="PEPTIDYL-TRNA HYDROLASE"/>
    <property type="match status" value="1"/>
</dbReference>
<dbReference type="PANTHER" id="PTHR17224:SF1">
    <property type="entry name" value="PEPTIDYL-TRNA HYDROLASE"/>
    <property type="match status" value="1"/>
</dbReference>
<dbReference type="Pfam" id="PF01195">
    <property type="entry name" value="Pept_tRNA_hydro"/>
    <property type="match status" value="1"/>
</dbReference>
<dbReference type="SUPFAM" id="SSF53178">
    <property type="entry name" value="Peptidyl-tRNA hydrolase-like"/>
    <property type="match status" value="1"/>
</dbReference>
<dbReference type="PROSITE" id="PS01195">
    <property type="entry name" value="PEPT_TRNA_HYDROL_1"/>
    <property type="match status" value="1"/>
</dbReference>
<name>PTH_CARHZ</name>
<keyword id="KW-0963">Cytoplasm</keyword>
<keyword id="KW-0378">Hydrolase</keyword>
<keyword id="KW-1185">Reference proteome</keyword>
<keyword id="KW-0694">RNA-binding</keyword>
<keyword id="KW-0820">tRNA-binding</keyword>
<organism>
    <name type="scientific">Carboxydothermus hydrogenoformans (strain ATCC BAA-161 / DSM 6008 / Z-2901)</name>
    <dbReference type="NCBI Taxonomy" id="246194"/>
    <lineage>
        <taxon>Bacteria</taxon>
        <taxon>Bacillati</taxon>
        <taxon>Bacillota</taxon>
        <taxon>Clostridia</taxon>
        <taxon>Thermoanaerobacterales</taxon>
        <taxon>Thermoanaerobacteraceae</taxon>
        <taxon>Carboxydothermus</taxon>
    </lineage>
</organism>
<gene>
    <name evidence="1" type="primary">pth</name>
    <name type="ordered locus">CHY_0196</name>
</gene>
<sequence>MFIIAGLGNPGQEYENTRHNAGFMVVDELAKKHGILITKRKFKSLVGEGEILGVKVLLLKPQTYMNLSGTAVQEAVSFYKLPLSRLVVVYDDLDLPLGKIRLRLKGSAGGHRGMGSIISCLGSEEIPRLKIGIGRPAVGDVKDYVLQPFTGAEREILEPTLKLAAEAITVALTEGFNKAMTDFNRGG</sequence>
<protein>
    <recommendedName>
        <fullName evidence="1">Peptidyl-tRNA hydrolase</fullName>
        <shortName evidence="1">Pth</shortName>
        <ecNumber evidence="1">3.1.1.29</ecNumber>
    </recommendedName>
</protein>
<evidence type="ECO:0000255" key="1">
    <source>
        <dbReference type="HAMAP-Rule" id="MF_00083"/>
    </source>
</evidence>
<evidence type="ECO:0000305" key="2"/>